<accession>P19730</accession>
<feature type="chain" id="PRO_0000079942" description="Phenol 2-monooxygenase, oxygenase component DmpL">
    <location>
        <begin position="1"/>
        <end position="331"/>
    </location>
</feature>
<gene>
    <name evidence="5" type="primary">dmpL</name>
    <name type="synonym">pheA2</name>
</gene>
<sequence length="331" mass="38208">MSVEIKTNTVDPIRQTYGNLQRRFGDKPASRYQEASYDIEAVTNFHYRPLWDPQHELHDPTRTAIRMTDWHKVTDPRQFYYGAYVQTRARMQEATEHAYGFCEKRELLSRLPAELQAKLLRCLVPLRHAELGANMNNSSIAGDSIAATVTQMHIYQAMDRLGMGQYLSRIGLLLDGGTGEALDQAKAYWLDDPIWQGLRRYVEDSFVIRDWFELGLAQNLVLDGLLQPLMYQRFDQWLTENGGSDVAMLTEFMRDWYGESTRWVDAMFKTVLAENDANREQVQAWLEVWEPRAYEALLPLAEEATGIAALDEVRSAFATRLQKIGLKSREE</sequence>
<protein>
    <recommendedName>
        <fullName evidence="6">Phenol 2-monooxygenase, oxygenase component DmpL</fullName>
        <ecNumber evidence="3">1.14.13.244</ecNumber>
    </recommendedName>
    <alternativeName>
        <fullName>Phenol 2-monooxygenase P1 component</fullName>
    </alternativeName>
    <alternativeName>
        <fullName>Phenol hydroxylase P1 protein</fullName>
    </alternativeName>
</protein>
<dbReference type="EC" id="1.14.13.244" evidence="3"/>
<dbReference type="EMBL" id="M60276">
    <property type="protein sequence ID" value="AAA25940.1"/>
    <property type="molecule type" value="Genomic_DNA"/>
</dbReference>
<dbReference type="EMBL" id="D28864">
    <property type="protein sequence ID" value="BAA06015.1"/>
    <property type="molecule type" value="Genomic_DNA"/>
</dbReference>
<dbReference type="SMR" id="P19730"/>
<dbReference type="BioCyc" id="MetaCyc:MONOMER-12795"/>
<dbReference type="BRENDA" id="1.14.13.244">
    <property type="organism ID" value="16277"/>
</dbReference>
<dbReference type="UniPathway" id="UPA00728"/>
<dbReference type="GO" id="GO:0005727">
    <property type="term" value="C:extrachromosomal circular DNA"/>
    <property type="evidence" value="ECO:0000314"/>
    <property type="project" value="UniProtKB"/>
</dbReference>
<dbReference type="GO" id="GO:0018662">
    <property type="term" value="F:phenol 2-monooxygenase activity"/>
    <property type="evidence" value="ECO:0000314"/>
    <property type="project" value="UniProtKB"/>
</dbReference>
<dbReference type="GO" id="GO:0046191">
    <property type="term" value="P:aerobic phenol-containing compound catabolic process"/>
    <property type="evidence" value="ECO:0000314"/>
    <property type="project" value="UniProtKB"/>
</dbReference>
<dbReference type="CDD" id="cd01058">
    <property type="entry name" value="AAMH_B"/>
    <property type="match status" value="1"/>
</dbReference>
<dbReference type="Gene3D" id="1.10.620.20">
    <property type="entry name" value="Ribonucleotide Reductase, subunit A"/>
    <property type="match status" value="1"/>
</dbReference>
<dbReference type="InterPro" id="IPR009078">
    <property type="entry name" value="Ferritin-like_SF"/>
</dbReference>
<dbReference type="InterPro" id="IPR012078">
    <property type="entry name" value="MP_mOase_hydro"/>
</dbReference>
<dbReference type="InterPro" id="IPR003430">
    <property type="entry name" value="Phenol_Hydrox"/>
</dbReference>
<dbReference type="InterPro" id="IPR012348">
    <property type="entry name" value="RNR-like"/>
</dbReference>
<dbReference type="Pfam" id="PF02332">
    <property type="entry name" value="Phenol_Hydrox"/>
    <property type="match status" value="1"/>
</dbReference>
<dbReference type="PIRSF" id="PIRSF000040">
    <property type="entry name" value="MMOH_comp"/>
    <property type="match status" value="1"/>
</dbReference>
<dbReference type="SUPFAM" id="SSF47240">
    <property type="entry name" value="Ferritin-like"/>
    <property type="match status" value="1"/>
</dbReference>
<proteinExistence type="evidence at protein level"/>
<geneLocation type="plasmid">
    <name>pVI150</name>
</geneLocation>
<organism>
    <name type="scientific">Pseudomonas sp. (strain CF600)</name>
    <dbReference type="NCBI Taxonomy" id="79676"/>
    <lineage>
        <taxon>Bacteria</taxon>
        <taxon>Pseudomonadati</taxon>
        <taxon>Pseudomonadota</taxon>
    </lineage>
</organism>
<name>DMPL_PSEUF</name>
<comment type="function">
    <text evidence="1 2 3">Part of a multicomponent enzyme which catalyzes the degradation of phenol and some of its methylated derivatives (PubMed:2254259). DmpL, DmpN and DmpO form the oxygenase component of the complex (PubMed:12186554). Required for growth on phenol and for in vitro phenol hydroxylase activity (PubMed:2254258, PubMed:2254259).</text>
</comment>
<comment type="catalytic activity">
    <reaction evidence="3">
        <text>phenol + NADH + O2 + H(+) = catechol + NAD(+) + H2O</text>
        <dbReference type="Rhea" id="RHEA:57952"/>
        <dbReference type="ChEBI" id="CHEBI:15377"/>
        <dbReference type="ChEBI" id="CHEBI:15378"/>
        <dbReference type="ChEBI" id="CHEBI:15379"/>
        <dbReference type="ChEBI" id="CHEBI:15882"/>
        <dbReference type="ChEBI" id="CHEBI:18135"/>
        <dbReference type="ChEBI" id="CHEBI:57540"/>
        <dbReference type="ChEBI" id="CHEBI:57945"/>
        <dbReference type="EC" id="1.14.13.244"/>
    </reaction>
    <physiologicalReaction direction="left-to-right" evidence="3">
        <dbReference type="Rhea" id="RHEA:57953"/>
    </physiologicalReaction>
</comment>
<comment type="activity regulation">
    <text evidence="1">Requires DmpM for efficient turnover. The activity of DmpLNO oxygenase is inhibited by dithiothreitol (DTT) by a mechanism apparently involving H(2)O(2) generation.</text>
</comment>
<comment type="pathway">
    <text evidence="2">Aromatic compound metabolism; phenol degradation.</text>
</comment>
<comment type="subunit">
    <text evidence="1 3 4">The multicomponent enzyme phenol hydroxylase is formed by DmpL (P1 component), DmpM (P2 component), DmpN (P3 component), DmpO (P4 component) and DmpP (P5 component) (PubMed:2254259). The oxygenase component is a dimer composed of three subunits, DmpL, DmpN and DmpO (DmpLNO) (PubMed:12186554). DmpL interacts with the auxiliary protein DmpK (P0 component) (PubMed:8995386).</text>
</comment>
<comment type="disruption phenotype">
    <text evidence="2">Cells lacking this gene cannot grow on phenol.</text>
</comment>
<comment type="similarity">
    <text evidence="6">Belongs to the TmoE/XamoE family.</text>
</comment>
<reference key="1">
    <citation type="journal article" date="1990" name="J. Bacteriol.">
        <title>Complete nucleotide sequence and polypeptide analysis of multicomponent phenol hydroxylase from Pseudomonas sp. strain CF600.</title>
        <authorList>
            <person name="Nordlund I."/>
            <person name="Powlowski J."/>
            <person name="Shingler V."/>
        </authorList>
    </citation>
    <scope>NUCLEOTIDE SEQUENCE [GENOMIC DNA]</scope>
    <scope>FUNCTION</scope>
    <scope>PATHWAY</scope>
    <scope>DISRUPTION PHENOTYPE</scope>
    <source>
        <strain>CF600</strain>
    </source>
</reference>
<reference key="2">
    <citation type="submission" date="1994-03" db="EMBL/GenBank/DDBJ databases">
        <authorList>
            <person name="Takeo M."/>
            <person name="Maeda Y."/>
            <person name="Okada H."/>
            <person name="Miyama K."/>
            <person name="Mori K."/>
            <person name="Ike M."/>
            <person name="Fujita M."/>
        </authorList>
    </citation>
    <scope>NUCLEOTIDE SEQUENCE [GENOMIC DNA]</scope>
    <source>
        <strain>BH</strain>
    </source>
</reference>
<reference key="3">
    <citation type="journal article" date="1990" name="J. Bacteriol.">
        <title>In vitro analysis of polypeptide requirements of multicomponent phenol hydroxylase from Pseudomonas sp. strain CF600.</title>
        <authorList>
            <person name="Powlowski J."/>
            <person name="Shingler V."/>
        </authorList>
    </citation>
    <scope>FUNCTION</scope>
    <scope>CATALYTIC ACTIVITY</scope>
    <scope>SUBUNIT</scope>
    <source>
        <strain>CF600</strain>
    </source>
</reference>
<reference key="4">
    <citation type="journal article" date="1997" name="J. Biol. Chem.">
        <title>On the role of DmpK, an auxiliary protein associated with multicomponent phenol hydroxylase from Pseudomonas sp. strain CF600.</title>
        <authorList>
            <person name="Powlowski J."/>
            <person name="Sealy J."/>
            <person name="Shingler V."/>
            <person name="Cadieux E."/>
        </authorList>
    </citation>
    <scope>INTERACTION WITH DMPK</scope>
    <source>
        <strain>CF600</strain>
    </source>
</reference>
<reference key="5">
    <citation type="journal article" date="2002" name="Biochemistry">
        <title>Biochemical, Moessbauer, and EPR studies of the diiron cluster of phenol hydroxylase from Pseudomonas sp. strain CF 600.</title>
        <authorList>
            <person name="Cadieux E."/>
            <person name="Vrajmasu V."/>
            <person name="Achim C."/>
            <person name="Powlowski J."/>
            <person name="Muenck E."/>
        </authorList>
    </citation>
    <scope>FUNCTION</scope>
    <scope>ACTIVITY REGULATION</scope>
    <scope>SUBUNIT</scope>
    <source>
        <strain>CF600</strain>
    </source>
</reference>
<keyword id="KW-0058">Aromatic hydrocarbons catabolism</keyword>
<keyword id="KW-0503">Monooxygenase</keyword>
<keyword id="KW-0520">NAD</keyword>
<keyword id="KW-0560">Oxidoreductase</keyword>
<keyword id="KW-0614">Plasmid</keyword>
<evidence type="ECO:0000269" key="1">
    <source>
    </source>
</evidence>
<evidence type="ECO:0000269" key="2">
    <source>
    </source>
</evidence>
<evidence type="ECO:0000269" key="3">
    <source>
    </source>
</evidence>
<evidence type="ECO:0000269" key="4">
    <source>
    </source>
</evidence>
<evidence type="ECO:0000303" key="5">
    <source>
    </source>
</evidence>
<evidence type="ECO:0000305" key="6"/>